<gene>
    <name type="primary">hupK</name>
</gene>
<name>HUPK_RHILV</name>
<comment type="similarity">
    <text evidence="1">Belongs to the HupK family.</text>
</comment>
<dbReference type="EMBL" id="X52974">
    <property type="protein sequence ID" value="CAA37158.1"/>
    <property type="molecule type" value="Genomic_DNA"/>
</dbReference>
<dbReference type="EMBL" id="Z36981">
    <property type="protein sequence ID" value="CAA85440.1"/>
    <property type="molecule type" value="Genomic_DNA"/>
</dbReference>
<dbReference type="PIR" id="S27344">
    <property type="entry name" value="S27344"/>
</dbReference>
<dbReference type="RefSeq" id="WP_018517055.1">
    <property type="nucleotide sequence ID" value="NZ_WIEG01000075.1"/>
</dbReference>
<dbReference type="SMR" id="P28153"/>
<dbReference type="GO" id="GO:0016151">
    <property type="term" value="F:nickel cation binding"/>
    <property type="evidence" value="ECO:0007669"/>
    <property type="project" value="InterPro"/>
</dbReference>
<dbReference type="Gene3D" id="1.10.645.10">
    <property type="entry name" value="Cytochrome-c3 Hydrogenase, chain B"/>
    <property type="match status" value="2"/>
</dbReference>
<dbReference type="InterPro" id="IPR001501">
    <property type="entry name" value="Ni-dep_hyd_lsu"/>
</dbReference>
<dbReference type="InterPro" id="IPR029014">
    <property type="entry name" value="NiFe-Hase_large"/>
</dbReference>
<dbReference type="InterPro" id="IPR050867">
    <property type="entry name" value="NiFe/NiFeSe_hydrgnase_LSU"/>
</dbReference>
<dbReference type="PANTHER" id="PTHR42958:SF4">
    <property type="entry name" value="HYDROGENASE EXPRESSION_FORMATION PROTEIN HUPK"/>
    <property type="match status" value="1"/>
</dbReference>
<dbReference type="PANTHER" id="PTHR42958">
    <property type="entry name" value="HYDROGENASE-2 LARGE CHAIN"/>
    <property type="match status" value="1"/>
</dbReference>
<dbReference type="Pfam" id="PF00374">
    <property type="entry name" value="NiFeSe_Hases"/>
    <property type="match status" value="1"/>
</dbReference>
<dbReference type="SUPFAM" id="SSF56762">
    <property type="entry name" value="HydB/Nqo4-like"/>
    <property type="match status" value="1"/>
</dbReference>
<evidence type="ECO:0000305" key="1"/>
<reference key="1">
    <citation type="journal article" date="1992" name="J. Mol. Biol.">
        <title>Nucleotide sequence and organization of an H2-uptake gene cluster from Rhizobium leguminosarum bv. viciae containing a rubredoxin-like gene and four additional open reading frames.</title>
        <authorList>
            <person name="Rey L."/>
            <person name="Hidalgo E."/>
            <person name="Palacios J.M."/>
            <person name="Ruiz-Argueso T."/>
        </authorList>
    </citation>
    <scope>NUCLEOTIDE SEQUENCE [GENOMIC DNA]</scope>
    <source>
        <strain>128c53</strain>
    </source>
</reference>
<reference key="2">
    <citation type="journal article" date="1993" name="Mol. Microbiol.">
        <title>HupK, a hydrogenase-ancillary protein from Rhizobium leguminosarum, shares structural motifs with the large subunit of NiFe hydrogenases and could be a scaffolding protein for hydrogenase metal cofactor assembly.</title>
        <authorList>
            <person name="Imperial J."/>
            <person name="Rey L."/>
            <person name="Ruiz-Argueso T."/>
        </authorList>
    </citation>
    <scope>NUCLEOTIDE SEQUENCE [GENOMIC DNA]</scope>
</reference>
<reference key="3">
    <citation type="journal article" date="1997" name="Mol. Plant Microbe Interact.">
        <title>Organization of the hup-region and its differential transcription in non-symbiotic and symbiotic cells of Rhizobium leguminosarum bv. viciae B10.</title>
        <authorList>
            <person name="Brito B."/>
            <person name="Palacios J.M."/>
            <person name="Imperial J."/>
            <person name="Ruiz-Argueso T."/>
            <person name="Yang W.C."/>
            <person name="Bisseling T."/>
            <person name="Schmitt H."/>
            <person name="Kerl V."/>
            <person name="Bauer T."/>
            <person name="Kokotek W."/>
            <person name="Lotz W."/>
        </authorList>
    </citation>
    <scope>NUCLEOTIDE SEQUENCE [GENOMIC DNA]</scope>
    <source>
        <strain>B10</strain>
    </source>
</reference>
<accession>P28153</accession>
<feature type="chain" id="PRO_0000201432" description="Hydrogenase expression/formation protein HupK">
    <location>
        <begin position="1"/>
        <end position="370"/>
    </location>
</feature>
<feature type="sequence conflict" description="In Ref. 1." evidence="1" ref="1">
    <original>A</original>
    <variation>R</variation>
    <location>
        <position position="240"/>
    </location>
</feature>
<proteinExistence type="inferred from homology"/>
<protein>
    <recommendedName>
        <fullName>Hydrogenase expression/formation protein HupK</fullName>
    </recommendedName>
</protein>
<organism>
    <name type="scientific">Rhizobium leguminosarum bv. viciae</name>
    <dbReference type="NCBI Taxonomy" id="387"/>
    <lineage>
        <taxon>Bacteria</taxon>
        <taxon>Pseudomonadati</taxon>
        <taxon>Pseudomonadota</taxon>
        <taxon>Alphaproteobacteria</taxon>
        <taxon>Hyphomicrobiales</taxon>
        <taxon>Rhizobiaceae</taxon>
        <taxon>Rhizobium/Agrobacterium group</taxon>
        <taxon>Rhizobium</taxon>
    </lineage>
</organism>
<sequence length="370" mass="38751">MTFLLGAGTIGIDVTVSRALACSVAVKANRPRGLTRMFVGRQPEEAPVLAGQVFSLCGFAQSVAARLAVLAAADLAMNDEERLGASAGLLAERIFETLRALILQWPTPLPERFAADAGRHLREALAASLAIISHAKAGRTSRPRLAAAAERLSAAATALGIPGRGDTPLPETACAAILRDVEDDHVFAGRRPDPLTISDDAEVVARLRDEAGYASLPHLSGRIAETGAYARSASAGLPEAPHLARRLRARIGDVRISLTQLTALARTGDFDCASLACSGPTPGAGGYGAVECARGRLYHQIEIGGDGRLAAYRILAPTEWNFHPAGPFVETLLSSPVGADEAAVRSISRLAVLFDPCVAFEINVREAADA</sequence>